<proteinExistence type="inferred from homology"/>
<organism>
    <name type="scientific">Pectobacterium atrosepticum (strain SCRI 1043 / ATCC BAA-672)</name>
    <name type="common">Erwinia carotovora subsp. atroseptica</name>
    <dbReference type="NCBI Taxonomy" id="218491"/>
    <lineage>
        <taxon>Bacteria</taxon>
        <taxon>Pseudomonadati</taxon>
        <taxon>Pseudomonadota</taxon>
        <taxon>Gammaproteobacteria</taxon>
        <taxon>Enterobacterales</taxon>
        <taxon>Pectobacteriaceae</taxon>
        <taxon>Pectobacterium</taxon>
    </lineage>
</organism>
<gene>
    <name evidence="1" type="primary">gsiB</name>
    <name type="ordered locus">ECA2834</name>
</gene>
<comment type="function">
    <text evidence="1">Part of the ABC transporter complex GsiABCD involved in glutathione import. Binds glutathione.</text>
</comment>
<comment type="subunit">
    <text evidence="1">The complex is composed of two ATP-binding proteins (GsiA), two transmembrane proteins (GsiC and GsiD) and a solute-binding protein (GsiB).</text>
</comment>
<comment type="subcellular location">
    <subcellularLocation>
        <location evidence="1">Periplasm</location>
    </subcellularLocation>
</comment>
<comment type="similarity">
    <text evidence="3">Belongs to the bacterial solute-binding protein 5 family.</text>
</comment>
<keyword id="KW-0574">Periplasm</keyword>
<keyword id="KW-1185">Reference proteome</keyword>
<keyword id="KW-0732">Signal</keyword>
<keyword id="KW-0813">Transport</keyword>
<name>GSIB_PECAS</name>
<reference key="1">
    <citation type="journal article" date="2004" name="Proc. Natl. Acad. Sci. U.S.A.">
        <title>Genome sequence of the enterobacterial phytopathogen Erwinia carotovora subsp. atroseptica and characterization of virulence factors.</title>
        <authorList>
            <person name="Bell K.S."/>
            <person name="Sebaihia M."/>
            <person name="Pritchard L."/>
            <person name="Holden M.T.G."/>
            <person name="Hyman L.J."/>
            <person name="Holeva M.C."/>
            <person name="Thomson N.R."/>
            <person name="Bentley S.D."/>
            <person name="Churcher L.J.C."/>
            <person name="Mungall K."/>
            <person name="Atkin R."/>
            <person name="Bason N."/>
            <person name="Brooks K."/>
            <person name="Chillingworth T."/>
            <person name="Clark K."/>
            <person name="Doggett J."/>
            <person name="Fraser A."/>
            <person name="Hance Z."/>
            <person name="Hauser H."/>
            <person name="Jagels K."/>
            <person name="Moule S."/>
            <person name="Norbertczak H."/>
            <person name="Ormond D."/>
            <person name="Price C."/>
            <person name="Quail M.A."/>
            <person name="Sanders M."/>
            <person name="Walker D."/>
            <person name="Whitehead S."/>
            <person name="Salmond G.P.C."/>
            <person name="Birch P.R.J."/>
            <person name="Parkhill J."/>
            <person name="Toth I.K."/>
        </authorList>
    </citation>
    <scope>NUCLEOTIDE SEQUENCE [LARGE SCALE GENOMIC DNA]</scope>
    <source>
        <strain>SCRI 1043 / ATCC BAA-672</strain>
    </source>
</reference>
<accession>Q6D3B0</accession>
<sequence length="514" mass="56724">MSVMTIQRRWLVAAGVTAAMVASPVWAAKDAVIAVGSTFTSLDPYDANDSLSQTVAKSFYQGLFGFDKDMKLINVLADSYDISSDGLTYTVKLHPGVKFHDGSAFNAAAVKVNLDRASNPDNRLKRYNLFKMIDKTEAVDDLTVKITLKTPFSAFVNNLAHPAAVMISPAALTQYGKEIGFHPVGTGPYRFVAWNQTDFVKVEKFSGYWKAGLPKLDSITWRPVVDNNTRAALLQTGEAQFAYPIPFEQAKVLEKNDKLALVASPSILHRYISMNVTQKPFDNPKVRQALNYAINKDALIKVAFSGYATPAEGPLPNSIDYSVKYHPWPYDPAKARELLKEAGYPNGFTTTLWSSHNHSTAQKVLQFTQQQLAQVGVKVQVTAMDAGQRAAEVEGKGVKETGVRLFYTGWSASTGEADWALSPLFATASWPPAQFNTAFYSNPQVDTDLANALKTTDRAEKQTLYKDAQDKIWADAPWIFLATERLVSANSKKLTGFYVMPDTLFSFEDADLTE</sequence>
<evidence type="ECO:0000250" key="1">
    <source>
        <dbReference type="UniProtKB" id="P75797"/>
    </source>
</evidence>
<evidence type="ECO:0000255" key="2"/>
<evidence type="ECO:0000305" key="3"/>
<dbReference type="EMBL" id="BX950851">
    <property type="protein sequence ID" value="CAG75734.1"/>
    <property type="molecule type" value="Genomic_DNA"/>
</dbReference>
<dbReference type="SMR" id="Q6D3B0"/>
<dbReference type="STRING" id="218491.ECA2834"/>
<dbReference type="KEGG" id="eca:ECA2834"/>
<dbReference type="eggNOG" id="COG0747">
    <property type="taxonomic scope" value="Bacteria"/>
</dbReference>
<dbReference type="HOGENOM" id="CLU_017028_7_3_6"/>
<dbReference type="Proteomes" id="UP000007966">
    <property type="component" value="Chromosome"/>
</dbReference>
<dbReference type="GO" id="GO:0043190">
    <property type="term" value="C:ATP-binding cassette (ABC) transporter complex"/>
    <property type="evidence" value="ECO:0007669"/>
    <property type="project" value="InterPro"/>
</dbReference>
<dbReference type="GO" id="GO:0030288">
    <property type="term" value="C:outer membrane-bounded periplasmic space"/>
    <property type="evidence" value="ECO:0007669"/>
    <property type="project" value="TreeGrafter"/>
</dbReference>
<dbReference type="GO" id="GO:1904680">
    <property type="term" value="F:peptide transmembrane transporter activity"/>
    <property type="evidence" value="ECO:0007669"/>
    <property type="project" value="TreeGrafter"/>
</dbReference>
<dbReference type="GO" id="GO:0042938">
    <property type="term" value="P:dipeptide transport"/>
    <property type="evidence" value="ECO:0007669"/>
    <property type="project" value="TreeGrafter"/>
</dbReference>
<dbReference type="CDD" id="cd08499">
    <property type="entry name" value="PBP2_Ylib_like"/>
    <property type="match status" value="1"/>
</dbReference>
<dbReference type="FunFam" id="3.10.105.10:FF:000003">
    <property type="entry name" value="Glutathione ABC transporter substrate-binding protein GsiB"/>
    <property type="match status" value="1"/>
</dbReference>
<dbReference type="FunFam" id="3.40.190.10:FF:000094">
    <property type="entry name" value="Glutathione ABC transporter substrate-binding protein GsiB"/>
    <property type="match status" value="1"/>
</dbReference>
<dbReference type="Gene3D" id="3.90.76.10">
    <property type="entry name" value="Dipeptide-binding Protein, Domain 1"/>
    <property type="match status" value="1"/>
</dbReference>
<dbReference type="Gene3D" id="3.10.105.10">
    <property type="entry name" value="Dipeptide-binding Protein, Domain 3"/>
    <property type="match status" value="1"/>
</dbReference>
<dbReference type="Gene3D" id="3.40.190.10">
    <property type="entry name" value="Periplasmic binding protein-like II"/>
    <property type="match status" value="1"/>
</dbReference>
<dbReference type="InterPro" id="IPR030678">
    <property type="entry name" value="Peptide/Ni-bd"/>
</dbReference>
<dbReference type="InterPro" id="IPR039424">
    <property type="entry name" value="SBP_5"/>
</dbReference>
<dbReference type="InterPro" id="IPR000914">
    <property type="entry name" value="SBP_5_dom"/>
</dbReference>
<dbReference type="NCBIfam" id="NF011942">
    <property type="entry name" value="PRK15413.1"/>
    <property type="match status" value="1"/>
</dbReference>
<dbReference type="PANTHER" id="PTHR30290:SF32">
    <property type="entry name" value="GLUTATHIONE-BINDING PROTEIN GSIB"/>
    <property type="match status" value="1"/>
</dbReference>
<dbReference type="PANTHER" id="PTHR30290">
    <property type="entry name" value="PERIPLASMIC BINDING COMPONENT OF ABC TRANSPORTER"/>
    <property type="match status" value="1"/>
</dbReference>
<dbReference type="Pfam" id="PF00496">
    <property type="entry name" value="SBP_bac_5"/>
    <property type="match status" value="1"/>
</dbReference>
<dbReference type="PIRSF" id="PIRSF002741">
    <property type="entry name" value="MppA"/>
    <property type="match status" value="1"/>
</dbReference>
<dbReference type="SUPFAM" id="SSF53850">
    <property type="entry name" value="Periplasmic binding protein-like II"/>
    <property type="match status" value="1"/>
</dbReference>
<protein>
    <recommendedName>
        <fullName evidence="1">Glutathione-binding protein GsiB</fullName>
    </recommendedName>
</protein>
<feature type="signal peptide" evidence="2">
    <location>
        <begin position="1"/>
        <end position="27"/>
    </location>
</feature>
<feature type="chain" id="PRO_0000279972" description="Glutathione-binding protein GsiB">
    <location>
        <begin position="28"/>
        <end position="514"/>
    </location>
</feature>